<name>HDGR3_RAT</name>
<reference key="1">
    <citation type="submission" date="2001-06" db="EMBL/GenBank/DDBJ databases">
        <authorList>
            <person name="Yu L."/>
        </authorList>
    </citation>
    <scope>NUCLEOTIDE SEQUENCE [MRNA]</scope>
</reference>
<reference key="2">
    <citation type="journal article" date="2012" name="Nat. Commun.">
        <title>Quantitative maps of protein phosphorylation sites across 14 different rat organs and tissues.</title>
        <authorList>
            <person name="Lundby A."/>
            <person name="Secher A."/>
            <person name="Lage K."/>
            <person name="Nordsborg N.B."/>
            <person name="Dmytriyev A."/>
            <person name="Lundby C."/>
            <person name="Olsen J.V."/>
        </authorList>
    </citation>
    <scope>PHOSPHORYLATION [LARGE SCALE ANALYSIS] AT SER-121; SER-122 AND SER-161</scope>
    <scope>IDENTIFICATION BY MASS SPECTROMETRY [LARGE SCALE ANALYSIS]</scope>
</reference>
<protein>
    <recommendedName>
        <fullName>Hepatoma-derived growth factor-related protein 3</fullName>
        <shortName>HRP-3</shortName>
    </recommendedName>
</protein>
<organism>
    <name type="scientific">Rattus norvegicus</name>
    <name type="common">Rat</name>
    <dbReference type="NCBI Taxonomy" id="10116"/>
    <lineage>
        <taxon>Eukaryota</taxon>
        <taxon>Metazoa</taxon>
        <taxon>Chordata</taxon>
        <taxon>Craniata</taxon>
        <taxon>Vertebrata</taxon>
        <taxon>Euteleostomi</taxon>
        <taxon>Mammalia</taxon>
        <taxon>Eutheria</taxon>
        <taxon>Euarchontoglires</taxon>
        <taxon>Glires</taxon>
        <taxon>Rodentia</taxon>
        <taxon>Myomorpha</taxon>
        <taxon>Muroidea</taxon>
        <taxon>Muridae</taxon>
        <taxon>Murinae</taxon>
        <taxon>Rattus</taxon>
    </lineage>
</organism>
<accession>Q923W4</accession>
<evidence type="ECO:0000250" key="1"/>
<evidence type="ECO:0000250" key="2">
    <source>
        <dbReference type="UniProtKB" id="Q9JMG7"/>
    </source>
</evidence>
<evidence type="ECO:0000255" key="3"/>
<evidence type="ECO:0000255" key="4">
    <source>
        <dbReference type="PROSITE-ProRule" id="PRU00162"/>
    </source>
</evidence>
<evidence type="ECO:0000256" key="5">
    <source>
        <dbReference type="SAM" id="MobiDB-lite"/>
    </source>
</evidence>
<evidence type="ECO:0007744" key="6">
    <source>
    </source>
</evidence>
<sequence>MARPRPREYKAGDLVFAKMKGYPHWPARIDELPEGAVKPPANKYPIFFFGTHETAFLGPKDLFPYKEYKDKFGKSNKRKGFNEGLWEIENNPGVKFTGYQTIQQQSSSETEGEGGNTADASSEEEGDRVEDGKGKRKNEKGGSKRKKSYTSKKSSKQSRKSPGDEDDKDCKEEENKSSSEGGDAGNDTRNTTSDLQKAGEGT</sequence>
<comment type="function">
    <text evidence="1">Enhances DNA synthesis and may play a role in cell proliferation.</text>
</comment>
<comment type="subcellular location">
    <subcellularLocation>
        <location evidence="1">Nucleus</location>
    </subcellularLocation>
</comment>
<feature type="chain" id="PRO_0000191705" description="Hepatoma-derived growth factor-related protein 3">
    <location>
        <begin position="1"/>
        <end position="202"/>
    </location>
</feature>
<feature type="domain" description="PWWP" evidence="4">
    <location>
        <begin position="11"/>
        <end position="68"/>
    </location>
</feature>
<feature type="region of interest" description="Disordered" evidence="5">
    <location>
        <begin position="90"/>
        <end position="202"/>
    </location>
</feature>
<feature type="short sequence motif" description="Nuclear localization signal" evidence="3">
    <location>
        <begin position="135"/>
        <end position="147"/>
    </location>
</feature>
<feature type="compositionally biased region" description="Basic residues" evidence="5">
    <location>
        <begin position="134"/>
        <end position="159"/>
    </location>
</feature>
<feature type="compositionally biased region" description="Basic and acidic residues" evidence="5">
    <location>
        <begin position="168"/>
        <end position="177"/>
    </location>
</feature>
<feature type="modified residue" description="Phosphothreonine" evidence="2">
    <location>
        <position position="110"/>
    </location>
</feature>
<feature type="modified residue" description="Phosphoserine" evidence="6">
    <location>
        <position position="121"/>
    </location>
</feature>
<feature type="modified residue" description="Phosphoserine" evidence="6">
    <location>
        <position position="122"/>
    </location>
</feature>
<feature type="modified residue" description="Phosphoserine" evidence="6">
    <location>
        <position position="161"/>
    </location>
</feature>
<gene>
    <name type="primary">Hdgfl3</name>
    <name type="synonym">Hdgfrp3</name>
    <name type="synonym">Hrp3</name>
</gene>
<keyword id="KW-0339">Growth factor</keyword>
<keyword id="KW-0539">Nucleus</keyword>
<keyword id="KW-0597">Phosphoprotein</keyword>
<keyword id="KW-1185">Reference proteome</keyword>
<proteinExistence type="evidence at protein level"/>
<dbReference type="EMBL" id="AF389347">
    <property type="protein sequence ID" value="AAK72965.1"/>
    <property type="molecule type" value="mRNA"/>
</dbReference>
<dbReference type="RefSeq" id="NP_665728.1">
    <property type="nucleotide sequence ID" value="NM_145785.2"/>
</dbReference>
<dbReference type="BMRB" id="Q923W4"/>
<dbReference type="SMR" id="Q923W4"/>
<dbReference type="BioGRID" id="251682">
    <property type="interactions" value="1"/>
</dbReference>
<dbReference type="FunCoup" id="Q923W4">
    <property type="interactions" value="2274"/>
</dbReference>
<dbReference type="STRING" id="10116.ENSRNOP00000026754"/>
<dbReference type="iPTMnet" id="Q923W4"/>
<dbReference type="PhosphoSitePlus" id="Q923W4"/>
<dbReference type="jPOST" id="Q923W4"/>
<dbReference type="PaxDb" id="10116-ENSRNOP00000026754"/>
<dbReference type="Ensembl" id="ENSRNOT00000026754.8">
    <property type="protein sequence ID" value="ENSRNOP00000026754.6"/>
    <property type="gene ID" value="ENSRNOG00000019740.8"/>
</dbReference>
<dbReference type="GeneID" id="252941"/>
<dbReference type="KEGG" id="rno:252941"/>
<dbReference type="UCSC" id="RGD:628773">
    <property type="organism name" value="rat"/>
</dbReference>
<dbReference type="AGR" id="RGD:628773"/>
<dbReference type="CTD" id="50810"/>
<dbReference type="RGD" id="628773">
    <property type="gene designation" value="Hdgfl3"/>
</dbReference>
<dbReference type="eggNOG" id="KOG1904">
    <property type="taxonomic scope" value="Eukaryota"/>
</dbReference>
<dbReference type="GeneTree" id="ENSGT00940000153942"/>
<dbReference type="HOGENOM" id="CLU_090867_1_0_1"/>
<dbReference type="InParanoid" id="Q923W4"/>
<dbReference type="OMA" id="THETXAI"/>
<dbReference type="PhylomeDB" id="Q923W4"/>
<dbReference type="PRO" id="PR:Q923W4"/>
<dbReference type="Proteomes" id="UP000002494">
    <property type="component" value="Chromosome 1"/>
</dbReference>
<dbReference type="Bgee" id="ENSRNOG00000019740">
    <property type="expression patterns" value="Expressed in cerebellum and 20 other cell types or tissues"/>
</dbReference>
<dbReference type="GO" id="GO:0005737">
    <property type="term" value="C:cytoplasm"/>
    <property type="evidence" value="ECO:0000266"/>
    <property type="project" value="RGD"/>
</dbReference>
<dbReference type="GO" id="GO:0005829">
    <property type="term" value="C:cytosol"/>
    <property type="evidence" value="ECO:0000250"/>
    <property type="project" value="UniProtKB"/>
</dbReference>
<dbReference type="GO" id="GO:0005634">
    <property type="term" value="C:nucleus"/>
    <property type="evidence" value="ECO:0000250"/>
    <property type="project" value="UniProtKB"/>
</dbReference>
<dbReference type="GO" id="GO:0008083">
    <property type="term" value="F:growth factor activity"/>
    <property type="evidence" value="ECO:0007669"/>
    <property type="project" value="UniProtKB-KW"/>
</dbReference>
<dbReference type="GO" id="GO:0008017">
    <property type="term" value="F:microtubule binding"/>
    <property type="evidence" value="ECO:0000250"/>
    <property type="project" value="UniProtKB"/>
</dbReference>
<dbReference type="GO" id="GO:0015631">
    <property type="term" value="F:tubulin binding"/>
    <property type="evidence" value="ECO:0000250"/>
    <property type="project" value="UniProtKB"/>
</dbReference>
<dbReference type="GO" id="GO:0046785">
    <property type="term" value="P:microtubule polymerization"/>
    <property type="evidence" value="ECO:0000250"/>
    <property type="project" value="UniProtKB"/>
</dbReference>
<dbReference type="GO" id="GO:0007026">
    <property type="term" value="P:negative regulation of microtubule depolymerization"/>
    <property type="evidence" value="ECO:0000250"/>
    <property type="project" value="UniProtKB"/>
</dbReference>
<dbReference type="GO" id="GO:0031175">
    <property type="term" value="P:neuron projection development"/>
    <property type="evidence" value="ECO:0000250"/>
    <property type="project" value="UniProtKB"/>
</dbReference>
<dbReference type="CDD" id="cd20150">
    <property type="entry name" value="PWWP_HDGFL3"/>
    <property type="match status" value="1"/>
</dbReference>
<dbReference type="FunFam" id="2.30.30.140:FF:000017">
    <property type="entry name" value="hepatoma-derived growth factor isoform X1"/>
    <property type="match status" value="1"/>
</dbReference>
<dbReference type="Gene3D" id="2.30.30.140">
    <property type="match status" value="1"/>
</dbReference>
<dbReference type="InterPro" id="IPR000313">
    <property type="entry name" value="PWWP_dom"/>
</dbReference>
<dbReference type="PANTHER" id="PTHR12550:SF82">
    <property type="entry name" value="HDGF LIKE 3"/>
    <property type="match status" value="1"/>
</dbReference>
<dbReference type="PANTHER" id="PTHR12550">
    <property type="entry name" value="HEPATOMA-DERIVED GROWTH FACTOR-RELATED"/>
    <property type="match status" value="1"/>
</dbReference>
<dbReference type="Pfam" id="PF00855">
    <property type="entry name" value="PWWP"/>
    <property type="match status" value="1"/>
</dbReference>
<dbReference type="SMART" id="SM00293">
    <property type="entry name" value="PWWP"/>
    <property type="match status" value="1"/>
</dbReference>
<dbReference type="SUPFAM" id="SSF63748">
    <property type="entry name" value="Tudor/PWWP/MBT"/>
    <property type="match status" value="1"/>
</dbReference>
<dbReference type="PROSITE" id="PS50812">
    <property type="entry name" value="PWWP"/>
    <property type="match status" value="1"/>
</dbReference>